<sequence>MHGKYPTLKDIVLELTPDPVGLHCNEQLDSSEDEVDEQATQATQATQHSTLLQCYQILTSCSKCCSNVRLVVECTGPDIHDLHDLLLGTLNIVCPLCAPKS</sequence>
<protein>
    <recommendedName>
        <fullName evidence="1">Protein E7</fullName>
    </recommendedName>
</protein>
<gene>
    <name evidence="1" type="primary">E7</name>
</gene>
<feature type="chain" id="PRO_0000133412" description="Protein E7">
    <location>
        <begin position="1"/>
        <end position="101"/>
    </location>
</feature>
<feature type="zinc finger region" evidence="1">
    <location>
        <begin position="61"/>
        <end position="97"/>
    </location>
</feature>
<feature type="region of interest" description="E7 terminal domain" evidence="1">
    <location>
        <begin position="1"/>
        <end position="40"/>
    </location>
</feature>
<feature type="short sequence motif" description="LXCXE motif; interaction with host RB1 and TMEM173/STING" evidence="1">
    <location>
        <begin position="22"/>
        <end position="26"/>
    </location>
</feature>
<feature type="short sequence motif" description="Nuclear export signal" evidence="1">
    <location>
        <begin position="79"/>
        <end position="87"/>
    </location>
</feature>
<comment type="function">
    <text evidence="1">Plays a role in viral genome replication by driving entry of quiescent cells into the cell cycle. Stimulation of progression from G1 to S phase allows the virus to efficiently use the cellular DNA replicating machinery to achieve viral genome replication. E7 protein has both transforming and trans-activating activities. Induces the disassembly of the E2F1 transcription factor from RB1, with subsequent transcriptional activation of E2F1-regulated S-phase genes. Interferes with host histone deacetylation mediated by HDAC1 and HDAC2, leading to transcription activation. Also plays a role in the inhibition of both antiviral and antiproliferative functions of host interferon alpha. Interaction with host TMEM173/STING impairs the ability of TMEM173/STING to sense cytosolic DNA and promote the production of type I interferon (IFN-alpha and IFN-beta).</text>
</comment>
<comment type="subunit">
    <text evidence="1">Homodimer. Homooligomer. Interacts with host RB1; this interaction induces dissociation of RB1-E2F1 complex thereby disrupting RB1 activity. Interacts with host EP300; this interaction represses EP300 transcriptional activity. Interacts with protein E2; this interaction inhibits E7 oncogenic activity. Interacts with host TMEM173/STING; this interaction impairs the ability of TMEM173/STING to sense cytosolic DNA and promote the production of type I interferon (IFN-alpha and IFN-beta).</text>
</comment>
<comment type="subcellular location">
    <subcellularLocation>
        <location evidence="1">Host cytoplasm</location>
    </subcellularLocation>
    <subcellularLocation>
        <location evidence="1">Host nucleus</location>
    </subcellularLocation>
    <text evidence="1">Predominantly found in the host nucleus.</text>
</comment>
<comment type="domain">
    <text evidence="1">The E7 terminal domain is an intrinsically disordered domain, whose flexibility and conformational transitions confer target adaptability to the oncoprotein. It allows adaptation to a variety of protein targets and exposes the PEST degradation sequence that regulates its turnover in the cell.</text>
</comment>
<comment type="PTM">
    <text evidence="1">Highly phosphorylated.</text>
</comment>
<comment type="similarity">
    <text evidence="1">Belongs to the papillomaviridae E7 protein family.</text>
</comment>
<reference key="1">
    <citation type="journal article" date="1992" name="Virology">
        <title>Human papillomavirus type 13 and pygmy chimpanzee papillomavirus type 1: comparison of the genome organizations.</title>
        <authorList>
            <person name="van Ranst M."/>
            <person name="Fuse A."/>
            <person name="Fiten P."/>
            <person name="Beuken E."/>
            <person name="Pfister H."/>
            <person name="Burk R.D."/>
            <person name="Opdenakker G."/>
        </authorList>
    </citation>
    <scope>NUCLEOTIDE SEQUENCE [GENOMIC DNA]</scope>
</reference>
<reference key="2">
    <citation type="journal article" date="2002" name="Rev. Med. Virol.">
        <title>Interactions of SV40 large T antigen and other viral proteins with retinoblastoma tumour suppressor.</title>
        <authorList>
            <person name="Lee C."/>
            <person name="Cho Y."/>
        </authorList>
    </citation>
    <scope>REVIEW</scope>
</reference>
<dbReference type="EMBL" id="X62843">
    <property type="protein sequence ID" value="CAA44648.1"/>
    <property type="molecule type" value="Genomic_DNA"/>
</dbReference>
<dbReference type="PIR" id="B42955">
    <property type="entry name" value="W7WL13"/>
</dbReference>
<dbReference type="SMR" id="Q02271"/>
<dbReference type="Proteomes" id="UP000009107">
    <property type="component" value="Genome"/>
</dbReference>
<dbReference type="GO" id="GO:0030430">
    <property type="term" value="C:host cell cytoplasm"/>
    <property type="evidence" value="ECO:0007669"/>
    <property type="project" value="UniProtKB-SubCell"/>
</dbReference>
<dbReference type="GO" id="GO:0042025">
    <property type="term" value="C:host cell nucleus"/>
    <property type="evidence" value="ECO:0007669"/>
    <property type="project" value="UniProtKB-SubCell"/>
</dbReference>
<dbReference type="GO" id="GO:0003677">
    <property type="term" value="F:DNA binding"/>
    <property type="evidence" value="ECO:0007669"/>
    <property type="project" value="UniProtKB-UniRule"/>
</dbReference>
<dbReference type="GO" id="GO:0003700">
    <property type="term" value="F:DNA-binding transcription factor activity"/>
    <property type="evidence" value="ECO:0007669"/>
    <property type="project" value="UniProtKB-UniRule"/>
</dbReference>
<dbReference type="GO" id="GO:0019904">
    <property type="term" value="F:protein domain specific binding"/>
    <property type="evidence" value="ECO:0007669"/>
    <property type="project" value="UniProtKB-UniRule"/>
</dbReference>
<dbReference type="GO" id="GO:0008270">
    <property type="term" value="F:zinc ion binding"/>
    <property type="evidence" value="ECO:0007669"/>
    <property type="project" value="UniProtKB-KW"/>
</dbReference>
<dbReference type="GO" id="GO:0006351">
    <property type="term" value="P:DNA-templated transcription"/>
    <property type="evidence" value="ECO:0007669"/>
    <property type="project" value="UniProtKB-UniRule"/>
</dbReference>
<dbReference type="GO" id="GO:0039645">
    <property type="term" value="P:symbiont-mediated perturbation of host cell cycle G1/S transition checkpoint"/>
    <property type="evidence" value="ECO:0007669"/>
    <property type="project" value="UniProtKB-UniRule"/>
</dbReference>
<dbReference type="GO" id="GO:0052170">
    <property type="term" value="P:symbiont-mediated suppression of host innate immune response"/>
    <property type="evidence" value="ECO:0007669"/>
    <property type="project" value="UniProtKB-KW"/>
</dbReference>
<dbReference type="GO" id="GO:0039502">
    <property type="term" value="P:symbiont-mediated suppression of host type I interferon-mediated signaling pathway"/>
    <property type="evidence" value="ECO:0007669"/>
    <property type="project" value="UniProtKB-UniRule"/>
</dbReference>
<dbReference type="Gene3D" id="3.30.160.330">
    <property type="match status" value="1"/>
</dbReference>
<dbReference type="HAMAP" id="MF_04004">
    <property type="entry name" value="PPV_E7"/>
    <property type="match status" value="1"/>
</dbReference>
<dbReference type="InterPro" id="IPR000148">
    <property type="entry name" value="Papilloma_E7"/>
</dbReference>
<dbReference type="Pfam" id="PF00527">
    <property type="entry name" value="E7"/>
    <property type="match status" value="1"/>
</dbReference>
<dbReference type="PIRSF" id="PIRSF003407">
    <property type="entry name" value="Papvi_E7"/>
    <property type="match status" value="1"/>
</dbReference>
<dbReference type="SUPFAM" id="SSF161234">
    <property type="entry name" value="E7 C-terminal domain-like"/>
    <property type="match status" value="1"/>
</dbReference>
<organism>
    <name type="scientific">Human papillomavirus 13</name>
    <dbReference type="NCBI Taxonomy" id="10573"/>
    <lineage>
        <taxon>Viruses</taxon>
        <taxon>Monodnaviria</taxon>
        <taxon>Shotokuvirae</taxon>
        <taxon>Cossaviricota</taxon>
        <taxon>Papovaviricetes</taxon>
        <taxon>Zurhausenvirales</taxon>
        <taxon>Papillomaviridae</taxon>
        <taxon>Firstpapillomavirinae</taxon>
        <taxon>Alphapapillomavirus</taxon>
        <taxon>Alphapapillomavirus 10</taxon>
    </lineage>
</organism>
<evidence type="ECO:0000255" key="1">
    <source>
        <dbReference type="HAMAP-Rule" id="MF_04004"/>
    </source>
</evidence>
<proteinExistence type="inferred from homology"/>
<organismHost>
    <name type="scientific">Homo sapiens</name>
    <name type="common">Human</name>
    <dbReference type="NCBI Taxonomy" id="9606"/>
</organismHost>
<keyword id="KW-0010">Activator</keyword>
<keyword id="KW-0238">DNA-binding</keyword>
<keyword id="KW-0244">Early protein</keyword>
<keyword id="KW-1078">G1/S host cell cycle checkpoint dysregulation by virus</keyword>
<keyword id="KW-1035">Host cytoplasm</keyword>
<keyword id="KW-1048">Host nucleus</keyword>
<keyword id="KW-0945">Host-virus interaction</keyword>
<keyword id="KW-1090">Inhibition of host innate immune response by virus</keyword>
<keyword id="KW-1114">Inhibition of host interferon signaling pathway by virus</keyword>
<keyword id="KW-0922">Interferon antiviral system evasion</keyword>
<keyword id="KW-0479">Metal-binding</keyword>
<keyword id="KW-1121">Modulation of host cell cycle by virus</keyword>
<keyword id="KW-0553">Oncogene</keyword>
<keyword id="KW-0804">Transcription</keyword>
<keyword id="KW-0805">Transcription regulation</keyword>
<keyword id="KW-0899">Viral immunoevasion</keyword>
<keyword id="KW-0862">Zinc</keyword>
<keyword id="KW-0863">Zinc-finger</keyword>
<accession>Q02271</accession>
<name>VE7_HPV13</name>